<feature type="transit peptide" description="Mitochondrion" evidence="7 10">
    <location>
        <begin position="1"/>
        <end position="22"/>
    </location>
</feature>
<feature type="chain" id="PRO_0000002554" description="F(1)-ATPase inhibitor IF(1), mitochondrial">
    <location>
        <begin position="23"/>
        <end position="85"/>
    </location>
</feature>
<feature type="coiled-coil region" evidence="1">
    <location>
        <begin position="41"/>
        <end position="84"/>
    </location>
</feature>
<feature type="mutagenesis site" description="No loss of inhibitory activity." evidence="2">
    <original>K</original>
    <variation>Q</variation>
    <variation>E</variation>
    <location>
        <position position="41"/>
    </location>
</feature>
<feature type="turn" evidence="13">
    <location>
        <begin position="24"/>
        <end position="28"/>
    </location>
</feature>
<feature type="helix" evidence="13">
    <location>
        <begin position="38"/>
        <end position="57"/>
    </location>
</feature>
<proteinExistence type="evidence at protein level"/>
<protein>
    <recommendedName>
        <fullName evidence="11">F(1)-ATPase inhibitor IF(1), mitochondrial</fullName>
    </recommendedName>
    <alternativeName>
        <fullName>ATPase inhibitory factor 1</fullName>
        <shortName>IF(1)</shortName>
        <shortName>IF1</shortName>
    </alternativeName>
</protein>
<sequence>MLPRSALARSLQLQRGVAARFYSEGSTGTPRGSGSEDSFVKRERATEDFFVRQREKEQLRHLKEQLEKQRKKIDSLENKIDSMTK</sequence>
<gene>
    <name type="primary">INH1</name>
    <name type="ordered locus">YDL181W</name>
    <name type="ORF">D1305</name>
</gene>
<organism>
    <name type="scientific">Saccharomyces cerevisiae (strain ATCC 204508 / S288c)</name>
    <name type="common">Baker's yeast</name>
    <dbReference type="NCBI Taxonomy" id="559292"/>
    <lineage>
        <taxon>Eukaryota</taxon>
        <taxon>Fungi</taxon>
        <taxon>Dikarya</taxon>
        <taxon>Ascomycota</taxon>
        <taxon>Saccharomycotina</taxon>
        <taxon>Saccharomycetes</taxon>
        <taxon>Saccharomycetales</taxon>
        <taxon>Saccharomycetaceae</taxon>
        <taxon>Saccharomyces</taxon>
    </lineage>
</organism>
<reference key="1">
    <citation type="journal article" date="1990" name="J. Biol. Chem.">
        <title>Activation of ATP hydrolysis by an uncoupler in mutant mitochondria lacking an intrinsic ATPase inhibitor in yeast.</title>
        <authorList>
            <person name="Ichikawa N."/>
            <person name="Yoshida Y."/>
            <person name="Hashimoto T."/>
            <person name="Ogasawara N."/>
            <person name="Yoshikawa H."/>
            <person name="Imamoto F."/>
            <person name="Tagawa K."/>
        </authorList>
    </citation>
    <scope>NUCLEOTIDE SEQUENCE [GENOMIC DNA]</scope>
</reference>
<reference key="2">
    <citation type="journal article" date="1995" name="Yeast">
        <title>New open reading frames, one of which is similar to the nifV gene of Azotobacter vinelandii, found on a 12.5 kbp fragment of chromosome IV of Saccharomyces cerevisiae.</title>
        <authorList>
            <person name="Verhasselt P."/>
            <person name="Voet M."/>
            <person name="Volckaert G."/>
        </authorList>
    </citation>
    <scope>NUCLEOTIDE SEQUENCE [GENOMIC DNA]</scope>
    <source>
        <strain>ATCC 96604 / S288c / FY1679</strain>
    </source>
</reference>
<reference key="3">
    <citation type="journal article" date="1997" name="Nature">
        <title>The nucleotide sequence of Saccharomyces cerevisiae chromosome IV.</title>
        <authorList>
            <person name="Jacq C."/>
            <person name="Alt-Moerbe J."/>
            <person name="Andre B."/>
            <person name="Arnold W."/>
            <person name="Bahr A."/>
            <person name="Ballesta J.P.G."/>
            <person name="Bargues M."/>
            <person name="Baron L."/>
            <person name="Becker A."/>
            <person name="Biteau N."/>
            <person name="Bloecker H."/>
            <person name="Blugeon C."/>
            <person name="Boskovic J."/>
            <person name="Brandt P."/>
            <person name="Brueckner M."/>
            <person name="Buitrago M.J."/>
            <person name="Coster F."/>
            <person name="Delaveau T."/>
            <person name="del Rey F."/>
            <person name="Dujon B."/>
            <person name="Eide L.G."/>
            <person name="Garcia-Cantalejo J.M."/>
            <person name="Goffeau A."/>
            <person name="Gomez-Peris A."/>
            <person name="Granotier C."/>
            <person name="Hanemann V."/>
            <person name="Hankeln T."/>
            <person name="Hoheisel J.D."/>
            <person name="Jaeger W."/>
            <person name="Jimenez A."/>
            <person name="Jonniaux J.-L."/>
            <person name="Kraemer C."/>
            <person name="Kuester H."/>
            <person name="Laamanen P."/>
            <person name="Legros Y."/>
            <person name="Louis E.J."/>
            <person name="Moeller-Rieker S."/>
            <person name="Monnet A."/>
            <person name="Moro M."/>
            <person name="Mueller-Auer S."/>
            <person name="Nussbaumer B."/>
            <person name="Paricio N."/>
            <person name="Paulin L."/>
            <person name="Perea J."/>
            <person name="Perez-Alonso M."/>
            <person name="Perez-Ortin J.E."/>
            <person name="Pohl T.M."/>
            <person name="Prydz H."/>
            <person name="Purnelle B."/>
            <person name="Rasmussen S.W."/>
            <person name="Remacha M.A."/>
            <person name="Revuelta J.L."/>
            <person name="Rieger M."/>
            <person name="Salom D."/>
            <person name="Saluz H.P."/>
            <person name="Saiz J.E."/>
            <person name="Saren A.-M."/>
            <person name="Schaefer M."/>
            <person name="Scharfe M."/>
            <person name="Schmidt E.R."/>
            <person name="Schneider C."/>
            <person name="Scholler P."/>
            <person name="Schwarz S."/>
            <person name="Soler-Mira A."/>
            <person name="Urrestarazu L.A."/>
            <person name="Verhasselt P."/>
            <person name="Vissers S."/>
            <person name="Voet M."/>
            <person name="Volckaert G."/>
            <person name="Wagner G."/>
            <person name="Wambutt R."/>
            <person name="Wedler E."/>
            <person name="Wedler H."/>
            <person name="Woelfl S."/>
            <person name="Harris D.E."/>
            <person name="Bowman S."/>
            <person name="Brown D."/>
            <person name="Churcher C.M."/>
            <person name="Connor R."/>
            <person name="Dedman K."/>
            <person name="Gentles S."/>
            <person name="Hamlin N."/>
            <person name="Hunt S."/>
            <person name="Jones L."/>
            <person name="McDonald S."/>
            <person name="Murphy L.D."/>
            <person name="Niblett D."/>
            <person name="Odell C."/>
            <person name="Oliver K."/>
            <person name="Rajandream M.A."/>
            <person name="Richards C."/>
            <person name="Shore L."/>
            <person name="Walsh S.V."/>
            <person name="Barrell B.G."/>
            <person name="Dietrich F.S."/>
            <person name="Mulligan J.T."/>
            <person name="Allen E."/>
            <person name="Araujo R."/>
            <person name="Aviles E."/>
            <person name="Berno A."/>
            <person name="Carpenter J."/>
            <person name="Chen E."/>
            <person name="Cherry J.M."/>
            <person name="Chung E."/>
            <person name="Duncan M."/>
            <person name="Hunicke-Smith S."/>
            <person name="Hyman R.W."/>
            <person name="Komp C."/>
            <person name="Lashkari D."/>
            <person name="Lew H."/>
            <person name="Lin D."/>
            <person name="Mosedale D."/>
            <person name="Nakahara K."/>
            <person name="Namath A."/>
            <person name="Oefner P."/>
            <person name="Oh C."/>
            <person name="Petel F.X."/>
            <person name="Roberts D."/>
            <person name="Schramm S."/>
            <person name="Schroeder M."/>
            <person name="Shogren T."/>
            <person name="Shroff N."/>
            <person name="Winant A."/>
            <person name="Yelton M.A."/>
            <person name="Botstein D."/>
            <person name="Davis R.W."/>
            <person name="Johnston M."/>
            <person name="Andrews S."/>
            <person name="Brinkman R."/>
            <person name="Cooper J."/>
            <person name="Ding H."/>
            <person name="Du Z."/>
            <person name="Favello A."/>
            <person name="Fulton L."/>
            <person name="Gattung S."/>
            <person name="Greco T."/>
            <person name="Hallsworth K."/>
            <person name="Hawkins J."/>
            <person name="Hillier L.W."/>
            <person name="Jier M."/>
            <person name="Johnson D."/>
            <person name="Johnston L."/>
            <person name="Kirsten J."/>
            <person name="Kucaba T."/>
            <person name="Langston Y."/>
            <person name="Latreille P."/>
            <person name="Le T."/>
            <person name="Mardis E."/>
            <person name="Menezes S."/>
            <person name="Miller N."/>
            <person name="Nhan M."/>
            <person name="Pauley A."/>
            <person name="Peluso D."/>
            <person name="Rifkin L."/>
            <person name="Riles L."/>
            <person name="Taich A."/>
            <person name="Trevaskis E."/>
            <person name="Vignati D."/>
            <person name="Wilcox L."/>
            <person name="Wohldman P."/>
            <person name="Vaudin M."/>
            <person name="Wilson R."/>
            <person name="Waterston R."/>
            <person name="Albermann K."/>
            <person name="Hani J."/>
            <person name="Heumann K."/>
            <person name="Kleine K."/>
            <person name="Mewes H.-W."/>
            <person name="Zollner A."/>
            <person name="Zaccaria P."/>
        </authorList>
    </citation>
    <scope>NUCLEOTIDE SEQUENCE [LARGE SCALE GENOMIC DNA]</scope>
    <source>
        <strain>ATCC 204508 / S288c</strain>
    </source>
</reference>
<reference key="4">
    <citation type="journal article" date="2014" name="G3 (Bethesda)">
        <title>The reference genome sequence of Saccharomyces cerevisiae: Then and now.</title>
        <authorList>
            <person name="Engel S.R."/>
            <person name="Dietrich F.S."/>
            <person name="Fisk D.G."/>
            <person name="Binkley G."/>
            <person name="Balakrishnan R."/>
            <person name="Costanzo M.C."/>
            <person name="Dwight S.S."/>
            <person name="Hitz B.C."/>
            <person name="Karra K."/>
            <person name="Nash R.S."/>
            <person name="Weng S."/>
            <person name="Wong E.D."/>
            <person name="Lloyd P."/>
            <person name="Skrzypek M.S."/>
            <person name="Miyasato S.R."/>
            <person name="Simison M."/>
            <person name="Cherry J.M."/>
        </authorList>
    </citation>
    <scope>GENOME REANNOTATION</scope>
    <source>
        <strain>ATCC 204508 / S288c</strain>
    </source>
</reference>
<reference key="5">
    <citation type="journal article" date="2007" name="Genome Res.">
        <title>Approaching a complete repository of sequence-verified protein-encoding clones for Saccharomyces cerevisiae.</title>
        <authorList>
            <person name="Hu Y."/>
            <person name="Rolfs A."/>
            <person name="Bhullar B."/>
            <person name="Murthy T.V.S."/>
            <person name="Zhu C."/>
            <person name="Berger M.F."/>
            <person name="Camargo A.A."/>
            <person name="Kelley F."/>
            <person name="McCarron S."/>
            <person name="Jepson D."/>
            <person name="Richardson A."/>
            <person name="Raphael J."/>
            <person name="Moreira D."/>
            <person name="Taycher E."/>
            <person name="Zuo D."/>
            <person name="Mohr S."/>
            <person name="Kane M.F."/>
            <person name="Williamson J."/>
            <person name="Simpson A.J.G."/>
            <person name="Bulyk M.L."/>
            <person name="Harlow E."/>
            <person name="Marsischky G."/>
            <person name="Kolodner R.D."/>
            <person name="LaBaer J."/>
        </authorList>
    </citation>
    <scope>NUCLEOTIDE SEQUENCE [GENOMIC DNA]</scope>
    <source>
        <strain>ATCC 204508 / S288c</strain>
    </source>
</reference>
<reference key="6">
    <citation type="journal article" date="1981" name="J. Biochem.">
        <title>Amino acid sequence of an intrinsic inhibitor of mitochondrial ATPase from yeast.</title>
        <authorList>
            <person name="Matsubara H."/>
            <person name="Hase T."/>
            <person name="Hashimoto T."/>
            <person name="Tagawa K."/>
        </authorList>
    </citation>
    <scope>PROTEIN SEQUENCE OF 23-85</scope>
</reference>
<reference key="7">
    <citation type="journal article" date="1983" name="J. Biochem.">
        <title>Partial amino terminal sequence of the precursor of mitochondrial ATPase inhibitor protein synthesized with mRNA partially purified by gel permeation chromatography.</title>
        <authorList>
            <person name="Yoshida Y."/>
            <person name="Hashimoto T."/>
            <person name="Hase T."/>
            <person name="Matsubara H."/>
            <person name="Tagawa K."/>
        </authorList>
    </citation>
    <scope>PROTEIN SEQUENCE OF 1-28</scope>
</reference>
<reference key="8">
    <citation type="journal article" date="2000" name="Biosci. Biotechnol. Biochem.">
        <title>Requirement for lysine-19 of the yeast mitochondrial ATPase inhibitor for the stability of the inactivated inhibitor-F1Fo complex at higher pH.</title>
        <authorList>
            <person name="Ichikawa N."/>
            <person name="Fujisaka R."/>
            <person name="Kuribayashi R."/>
        </authorList>
    </citation>
    <scope>MUTAGENESIS OF LYS-41</scope>
</reference>
<reference key="9">
    <citation type="journal article" date="2002" name="J. Biol. Chem.">
        <title>Formation of the yeast F1F0-ATP synthase dimeric complex does not require the ATPase inhibitor protein, Inh1.</title>
        <authorList>
            <person name="Dienhart M."/>
            <person name="Pfeiffer K."/>
            <person name="Schagger H."/>
            <person name="Stuart R.A."/>
        </authorList>
    </citation>
    <scope>FUNCTION</scope>
</reference>
<reference key="10">
    <citation type="journal article" date="2002" name="J. Biol. Chem.">
        <title>Homologous and heterologous inhibitory effects of ATPase inhibitor proteins on F-ATPases.</title>
        <authorList>
            <person name="Cabezon E."/>
            <person name="Butler P.J."/>
            <person name="Runswick M.J."/>
            <person name="Carbajo R.J."/>
            <person name="Walker J.E."/>
        </authorList>
    </citation>
    <scope>SUBUNIT</scope>
</reference>
<reference key="11">
    <citation type="journal article" date="2003" name="Biochemistry">
        <title>Investigation of the role and mechanism of IF1 and STF1 proteins, twin inhibitory peptides which interact with the yeast mitochondrial ATP synthase.</title>
        <authorList>
            <person name="Venard R."/>
            <person name="Brethes D."/>
            <person name="Giraud M.F."/>
            <person name="Vaillier J."/>
            <person name="Velours J."/>
            <person name="Haraux F."/>
        </authorList>
    </citation>
    <scope>FUNCTION</scope>
    <scope>SUBCELLULAR LOCATION</scope>
</reference>
<reference key="12">
    <citation type="journal article" date="2003" name="Nature">
        <title>Global analysis of protein expression in yeast.</title>
        <authorList>
            <person name="Ghaemmaghami S."/>
            <person name="Huh W.-K."/>
            <person name="Bower K."/>
            <person name="Howson R.W."/>
            <person name="Belle A."/>
            <person name="Dephoure N."/>
            <person name="O'Shea E.K."/>
            <person name="Weissman J.S."/>
        </authorList>
    </citation>
    <scope>LEVEL OF PROTEIN EXPRESSION [LARGE SCALE ANALYSIS]</scope>
</reference>
<reference key="13">
    <citation type="journal article" date="2015" name="J. Bioenerg. Biomembr.">
        <title>The region from phenylalanine-28 to lysine-50 of a yeast mitochondrial ATPase inhibitor (IF1) forms an alpha-helix in solution.</title>
        <authorList>
            <person name="Sun L."/>
            <person name="Nakamae N."/>
            <person name="Ichikawa N."/>
        </authorList>
    </citation>
    <scope>FUNCTION</scope>
</reference>
<reference evidence="12" key="14">
    <citation type="journal article" date="2013" name="Open Biol.">
        <title>The structure of F(1)-ATPase from Saccharomyces cerevisiae inhibited by its regulatory protein IF(1).</title>
        <authorList>
            <person name="Robinson G.C."/>
            <person name="Bason J.V."/>
            <person name="Montgomery M.G."/>
            <person name="Fearnley I.M."/>
            <person name="Mueller D.M."/>
            <person name="Leslie A.G."/>
            <person name="Walker J.E."/>
        </authorList>
    </citation>
    <scope>X-RAY CRYSTALLOGRAPHY (2.50 ANGSTROMS) OF 23-85</scope>
</reference>
<comment type="function">
    <text evidence="3 5 8 9">Endogenous ATPase inhibitor, which inhibits specifically the reverse ATPase reaction of mitochondrial F(1)F(0)-type ATP synthase. It limits ATP depletion when the mitochondrial membrane potential falls below a threshold and the F(1)F(0)-ATP synthase starts hydrolyzing ATP to pump protons out of the mitochondrial matrix. Required to avoid the consumption of cellular ATP when the F(1)F(0)-ATP synthase enzyme acts as an ATP hydrolase (PubMed:12167646, PubMed:12809520, PubMed:26420258). Functions through inserting its N-terminal part into the catalytically active F1-ATPase, thereby blocking its rotational movement and subsequently the ATP hydrolase activity (PubMed:23407639).</text>
</comment>
<comment type="subunit">
    <text evidence="4">Monomer and homodimer. The protein aggregates less strongly with increasing pH.</text>
</comment>
<comment type="subcellular location">
    <subcellularLocation>
        <location evidence="5">Mitochondrion</location>
    </subcellularLocation>
</comment>
<comment type="domain">
    <text evidence="8">The inhibitory N-terminal region (residues 23-59) is entrapped between the C-terminal domains of the alpha(ADP-bound)-beta(ADP-bound) (ATP1-ATP2) subunits in one of the 3 catalytic interfaces of F(1)F(0)-ATPase.</text>
</comment>
<comment type="miscellaneous">
    <text evidence="6">Present with 981 molecules/cell in log phase SD medium.</text>
</comment>
<comment type="similarity">
    <text evidence="11">Belongs to the ATPase inhibitor family.</text>
</comment>
<accession>P01097</accession>
<accession>D6VRH1</accession>
<evidence type="ECO:0000255" key="1"/>
<evidence type="ECO:0000269" key="2">
    <source>
    </source>
</evidence>
<evidence type="ECO:0000269" key="3">
    <source>
    </source>
</evidence>
<evidence type="ECO:0000269" key="4">
    <source>
    </source>
</evidence>
<evidence type="ECO:0000269" key="5">
    <source>
    </source>
</evidence>
<evidence type="ECO:0000269" key="6">
    <source>
    </source>
</evidence>
<evidence type="ECO:0000269" key="7">
    <source>
    </source>
</evidence>
<evidence type="ECO:0000269" key="8">
    <source>
    </source>
</evidence>
<evidence type="ECO:0000269" key="9">
    <source>
    </source>
</evidence>
<evidence type="ECO:0000269" key="10">
    <source>
    </source>
</evidence>
<evidence type="ECO:0000305" key="11"/>
<evidence type="ECO:0007744" key="12">
    <source>
        <dbReference type="PDB" id="3ZIA"/>
    </source>
</evidence>
<evidence type="ECO:0007829" key="13">
    <source>
        <dbReference type="PDB" id="3ZIA"/>
    </source>
</evidence>
<dbReference type="EMBL" id="D00443">
    <property type="protein sequence ID" value="BAA00344.1"/>
    <property type="molecule type" value="Genomic_DNA"/>
</dbReference>
<dbReference type="EMBL" id="X83276">
    <property type="protein sequence ID" value="CAA58265.1"/>
    <property type="molecule type" value="Genomic_DNA"/>
</dbReference>
<dbReference type="EMBL" id="Z74229">
    <property type="protein sequence ID" value="CAA98755.1"/>
    <property type="molecule type" value="Genomic_DNA"/>
</dbReference>
<dbReference type="EMBL" id="AY558374">
    <property type="protein sequence ID" value="AAS56700.1"/>
    <property type="molecule type" value="Genomic_DNA"/>
</dbReference>
<dbReference type="EMBL" id="BK006938">
    <property type="protein sequence ID" value="DAA11681.1"/>
    <property type="molecule type" value="Genomic_DNA"/>
</dbReference>
<dbReference type="PIR" id="A35231">
    <property type="entry name" value="IWBY"/>
</dbReference>
<dbReference type="RefSeq" id="NP_010100.1">
    <property type="nucleotide sequence ID" value="NM_001180241.1"/>
</dbReference>
<dbReference type="PDB" id="3ZIA">
    <property type="method" value="X-ray"/>
    <property type="resolution" value="2.50 A"/>
    <property type="chains" value="J/T=23-85"/>
</dbReference>
<dbReference type="PDBsum" id="3ZIA"/>
<dbReference type="SMR" id="P01097"/>
<dbReference type="BioGRID" id="31863">
    <property type="interactions" value="114"/>
</dbReference>
<dbReference type="DIP" id="DIP-2985N"/>
<dbReference type="FunCoup" id="P01097">
    <property type="interactions" value="117"/>
</dbReference>
<dbReference type="IntAct" id="P01097">
    <property type="interactions" value="20"/>
</dbReference>
<dbReference type="MINT" id="P01097"/>
<dbReference type="STRING" id="4932.YDL181W"/>
<dbReference type="iPTMnet" id="P01097"/>
<dbReference type="PaxDb" id="4932-YDL181W"/>
<dbReference type="PeptideAtlas" id="P01097"/>
<dbReference type="EnsemblFungi" id="YDL181W_mRNA">
    <property type="protein sequence ID" value="YDL181W"/>
    <property type="gene ID" value="YDL181W"/>
</dbReference>
<dbReference type="GeneID" id="851347"/>
<dbReference type="KEGG" id="sce:YDL181W"/>
<dbReference type="AGR" id="SGD:S000002340"/>
<dbReference type="SGD" id="S000002340">
    <property type="gene designation" value="INH1"/>
</dbReference>
<dbReference type="VEuPathDB" id="FungiDB:YDL181W"/>
<dbReference type="eggNOG" id="ENOG502SCJG">
    <property type="taxonomic scope" value="Eukaryota"/>
</dbReference>
<dbReference type="GeneTree" id="ENSGT00940000176616"/>
<dbReference type="HOGENOM" id="CLU_145563_4_0_1"/>
<dbReference type="InParanoid" id="P01097"/>
<dbReference type="OMA" id="NQGGEHN"/>
<dbReference type="OrthoDB" id="5532350at2759"/>
<dbReference type="BioCyc" id="YEAST:G3O-29568-MONOMER"/>
<dbReference type="BioGRID-ORCS" id="851347">
    <property type="hits" value="2 hits in 10 CRISPR screens"/>
</dbReference>
<dbReference type="EvolutionaryTrace" id="P01097"/>
<dbReference type="PRO" id="PR:P01097"/>
<dbReference type="Proteomes" id="UP000002311">
    <property type="component" value="Chromosome IV"/>
</dbReference>
<dbReference type="RNAct" id="P01097">
    <property type="molecule type" value="protein"/>
</dbReference>
<dbReference type="GO" id="GO:0005739">
    <property type="term" value="C:mitochondrion"/>
    <property type="evidence" value="ECO:0000314"/>
    <property type="project" value="SGD"/>
</dbReference>
<dbReference type="GO" id="GO:0042030">
    <property type="term" value="F:ATPase inhibitor activity"/>
    <property type="evidence" value="ECO:0000314"/>
    <property type="project" value="SGD"/>
</dbReference>
<dbReference type="GO" id="GO:0004857">
    <property type="term" value="F:enzyme inhibitor activity"/>
    <property type="evidence" value="ECO:0000314"/>
    <property type="project" value="SGD"/>
</dbReference>
<dbReference type="GO" id="GO:0140678">
    <property type="term" value="F:molecular function inhibitor activity"/>
    <property type="evidence" value="ECO:0000269"/>
    <property type="project" value="DisProt"/>
</dbReference>
<dbReference type="DisProt" id="DP00995"/>
<dbReference type="FunFam" id="1.20.5.500:FF:000006">
    <property type="entry name" value="ATPase inhibitor, mitochondrial"/>
    <property type="match status" value="1"/>
</dbReference>
<dbReference type="Gene3D" id="1.20.5.500">
    <property type="entry name" value="Single helix bin"/>
    <property type="match status" value="1"/>
</dbReference>
<dbReference type="InterPro" id="IPR007648">
    <property type="entry name" value="ATPase_inhibitor_mt"/>
</dbReference>
<dbReference type="Pfam" id="PF04568">
    <property type="entry name" value="IATP"/>
    <property type="match status" value="1"/>
</dbReference>
<dbReference type="SUPFAM" id="SSF64602">
    <property type="entry name" value="F1 ATPase inhibitor, IF1, C-terminal domain"/>
    <property type="match status" value="1"/>
</dbReference>
<keyword id="KW-0002">3D-structure</keyword>
<keyword id="KW-0175">Coiled coil</keyword>
<keyword id="KW-0903">Direct protein sequencing</keyword>
<keyword id="KW-0496">Mitochondrion</keyword>
<keyword id="KW-1185">Reference proteome</keyword>
<keyword id="KW-0809">Transit peptide</keyword>
<name>ATIF_YEAST</name>